<sequence length="139" mass="15461">MIFMEVTLAIVKPDGVKRGLIGEILKRYENKGLRLKAAKVVTPSIELLEKHYEEHKGKPFFKPLIEYMSSGPVFAMVLEGENAVKLVRMINGATKVEDALPGTIRGDFASSTTYNVVHGSDSVESAKREIALWFPELIL</sequence>
<evidence type="ECO:0000255" key="1">
    <source>
        <dbReference type="HAMAP-Rule" id="MF_00451"/>
    </source>
</evidence>
<proteinExistence type="inferred from homology"/>
<dbReference type="EC" id="2.7.4.6" evidence="1"/>
<dbReference type="EMBL" id="AE008691">
    <property type="protein sequence ID" value="AAM24008.1"/>
    <property type="molecule type" value="Genomic_DNA"/>
</dbReference>
<dbReference type="SMR" id="Q8RBR5"/>
<dbReference type="STRING" id="273068.TTE0747"/>
<dbReference type="KEGG" id="tte:TTE0747"/>
<dbReference type="eggNOG" id="COG0105">
    <property type="taxonomic scope" value="Bacteria"/>
</dbReference>
<dbReference type="HOGENOM" id="CLU_060216_6_3_9"/>
<dbReference type="Proteomes" id="UP000000555">
    <property type="component" value="Chromosome"/>
</dbReference>
<dbReference type="GO" id="GO:0005737">
    <property type="term" value="C:cytoplasm"/>
    <property type="evidence" value="ECO:0007669"/>
    <property type="project" value="UniProtKB-SubCell"/>
</dbReference>
<dbReference type="GO" id="GO:0005524">
    <property type="term" value="F:ATP binding"/>
    <property type="evidence" value="ECO:0007669"/>
    <property type="project" value="UniProtKB-UniRule"/>
</dbReference>
<dbReference type="GO" id="GO:0046872">
    <property type="term" value="F:metal ion binding"/>
    <property type="evidence" value="ECO:0007669"/>
    <property type="project" value="UniProtKB-KW"/>
</dbReference>
<dbReference type="GO" id="GO:0004550">
    <property type="term" value="F:nucleoside diphosphate kinase activity"/>
    <property type="evidence" value="ECO:0007669"/>
    <property type="project" value="UniProtKB-UniRule"/>
</dbReference>
<dbReference type="GO" id="GO:0006241">
    <property type="term" value="P:CTP biosynthetic process"/>
    <property type="evidence" value="ECO:0007669"/>
    <property type="project" value="UniProtKB-UniRule"/>
</dbReference>
<dbReference type="GO" id="GO:0006183">
    <property type="term" value="P:GTP biosynthetic process"/>
    <property type="evidence" value="ECO:0007669"/>
    <property type="project" value="UniProtKB-UniRule"/>
</dbReference>
<dbReference type="GO" id="GO:0006228">
    <property type="term" value="P:UTP biosynthetic process"/>
    <property type="evidence" value="ECO:0007669"/>
    <property type="project" value="UniProtKB-UniRule"/>
</dbReference>
<dbReference type="CDD" id="cd04413">
    <property type="entry name" value="NDPk_I"/>
    <property type="match status" value="1"/>
</dbReference>
<dbReference type="FunFam" id="3.30.70.141:FF:000003">
    <property type="entry name" value="Nucleoside diphosphate kinase"/>
    <property type="match status" value="1"/>
</dbReference>
<dbReference type="Gene3D" id="3.30.70.141">
    <property type="entry name" value="Nucleoside diphosphate kinase-like domain"/>
    <property type="match status" value="1"/>
</dbReference>
<dbReference type="HAMAP" id="MF_00451">
    <property type="entry name" value="NDP_kinase"/>
    <property type="match status" value="1"/>
</dbReference>
<dbReference type="InterPro" id="IPR034907">
    <property type="entry name" value="NDK-like_dom"/>
</dbReference>
<dbReference type="InterPro" id="IPR036850">
    <property type="entry name" value="NDK-like_dom_sf"/>
</dbReference>
<dbReference type="InterPro" id="IPR001564">
    <property type="entry name" value="Nucleoside_diP_kinase"/>
</dbReference>
<dbReference type="InterPro" id="IPR023005">
    <property type="entry name" value="Nucleoside_diP_kinase_AS"/>
</dbReference>
<dbReference type="NCBIfam" id="NF001908">
    <property type="entry name" value="PRK00668.1"/>
    <property type="match status" value="1"/>
</dbReference>
<dbReference type="PANTHER" id="PTHR11349">
    <property type="entry name" value="NUCLEOSIDE DIPHOSPHATE KINASE"/>
    <property type="match status" value="1"/>
</dbReference>
<dbReference type="Pfam" id="PF00334">
    <property type="entry name" value="NDK"/>
    <property type="match status" value="1"/>
</dbReference>
<dbReference type="PRINTS" id="PR01243">
    <property type="entry name" value="NUCDPKINASE"/>
</dbReference>
<dbReference type="SMART" id="SM00562">
    <property type="entry name" value="NDK"/>
    <property type="match status" value="1"/>
</dbReference>
<dbReference type="SUPFAM" id="SSF54919">
    <property type="entry name" value="Nucleoside diphosphate kinase, NDK"/>
    <property type="match status" value="1"/>
</dbReference>
<dbReference type="PROSITE" id="PS00469">
    <property type="entry name" value="NDPK"/>
    <property type="match status" value="1"/>
</dbReference>
<dbReference type="PROSITE" id="PS51374">
    <property type="entry name" value="NDPK_LIKE"/>
    <property type="match status" value="1"/>
</dbReference>
<feature type="chain" id="PRO_0000137068" description="Nucleoside diphosphate kinase">
    <location>
        <begin position="1"/>
        <end position="139"/>
    </location>
</feature>
<feature type="active site" description="Pros-phosphohistidine intermediate" evidence="1">
    <location>
        <position position="118"/>
    </location>
</feature>
<feature type="binding site" evidence="1">
    <location>
        <position position="12"/>
    </location>
    <ligand>
        <name>ATP</name>
        <dbReference type="ChEBI" id="CHEBI:30616"/>
    </ligand>
</feature>
<feature type="binding site" evidence="1">
    <location>
        <position position="60"/>
    </location>
    <ligand>
        <name>ATP</name>
        <dbReference type="ChEBI" id="CHEBI:30616"/>
    </ligand>
</feature>
<feature type="binding site" evidence="1">
    <location>
        <position position="88"/>
    </location>
    <ligand>
        <name>ATP</name>
        <dbReference type="ChEBI" id="CHEBI:30616"/>
    </ligand>
</feature>
<feature type="binding site" evidence="1">
    <location>
        <position position="94"/>
    </location>
    <ligand>
        <name>ATP</name>
        <dbReference type="ChEBI" id="CHEBI:30616"/>
    </ligand>
</feature>
<feature type="binding site" evidence="1">
    <location>
        <position position="105"/>
    </location>
    <ligand>
        <name>ATP</name>
        <dbReference type="ChEBI" id="CHEBI:30616"/>
    </ligand>
</feature>
<feature type="binding site" evidence="1">
    <location>
        <position position="115"/>
    </location>
    <ligand>
        <name>ATP</name>
        <dbReference type="ChEBI" id="CHEBI:30616"/>
    </ligand>
</feature>
<gene>
    <name evidence="1" type="primary">ndk</name>
    <name type="ordered locus">TTE0747</name>
</gene>
<protein>
    <recommendedName>
        <fullName evidence="1">Nucleoside diphosphate kinase</fullName>
        <shortName evidence="1">NDK</shortName>
        <shortName evidence="1">NDP kinase</shortName>
        <ecNumber evidence="1">2.7.4.6</ecNumber>
    </recommendedName>
    <alternativeName>
        <fullName evidence="1">Nucleoside-2-P kinase</fullName>
    </alternativeName>
</protein>
<reference key="1">
    <citation type="journal article" date="2002" name="Genome Res.">
        <title>A complete sequence of the T. tengcongensis genome.</title>
        <authorList>
            <person name="Bao Q."/>
            <person name="Tian Y."/>
            <person name="Li W."/>
            <person name="Xu Z."/>
            <person name="Xuan Z."/>
            <person name="Hu S."/>
            <person name="Dong W."/>
            <person name="Yang J."/>
            <person name="Chen Y."/>
            <person name="Xue Y."/>
            <person name="Xu Y."/>
            <person name="Lai X."/>
            <person name="Huang L."/>
            <person name="Dong X."/>
            <person name="Ma Y."/>
            <person name="Ling L."/>
            <person name="Tan H."/>
            <person name="Chen R."/>
            <person name="Wang J."/>
            <person name="Yu J."/>
            <person name="Yang H."/>
        </authorList>
    </citation>
    <scope>NUCLEOTIDE SEQUENCE [LARGE SCALE GENOMIC DNA]</scope>
    <source>
        <strain>DSM 15242 / JCM 11007 / NBRC 100824 / MB4</strain>
    </source>
</reference>
<organism>
    <name type="scientific">Caldanaerobacter subterraneus subsp. tengcongensis (strain DSM 15242 / JCM 11007 / NBRC 100824 / MB4)</name>
    <name type="common">Thermoanaerobacter tengcongensis</name>
    <dbReference type="NCBI Taxonomy" id="273068"/>
    <lineage>
        <taxon>Bacteria</taxon>
        <taxon>Bacillati</taxon>
        <taxon>Bacillota</taxon>
        <taxon>Clostridia</taxon>
        <taxon>Thermoanaerobacterales</taxon>
        <taxon>Thermoanaerobacteraceae</taxon>
        <taxon>Caldanaerobacter</taxon>
    </lineage>
</organism>
<comment type="function">
    <text evidence="1">Major role in the synthesis of nucleoside triphosphates other than ATP. The ATP gamma phosphate is transferred to the NDP beta phosphate via a ping-pong mechanism, using a phosphorylated active-site intermediate.</text>
</comment>
<comment type="catalytic activity">
    <reaction evidence="1">
        <text>a 2'-deoxyribonucleoside 5'-diphosphate + ATP = a 2'-deoxyribonucleoside 5'-triphosphate + ADP</text>
        <dbReference type="Rhea" id="RHEA:44640"/>
        <dbReference type="ChEBI" id="CHEBI:30616"/>
        <dbReference type="ChEBI" id="CHEBI:61560"/>
        <dbReference type="ChEBI" id="CHEBI:73316"/>
        <dbReference type="ChEBI" id="CHEBI:456216"/>
        <dbReference type="EC" id="2.7.4.6"/>
    </reaction>
</comment>
<comment type="catalytic activity">
    <reaction evidence="1">
        <text>a ribonucleoside 5'-diphosphate + ATP = a ribonucleoside 5'-triphosphate + ADP</text>
        <dbReference type="Rhea" id="RHEA:18113"/>
        <dbReference type="ChEBI" id="CHEBI:30616"/>
        <dbReference type="ChEBI" id="CHEBI:57930"/>
        <dbReference type="ChEBI" id="CHEBI:61557"/>
        <dbReference type="ChEBI" id="CHEBI:456216"/>
        <dbReference type="EC" id="2.7.4.6"/>
    </reaction>
</comment>
<comment type="cofactor">
    <cofactor evidence="1">
        <name>Mg(2+)</name>
        <dbReference type="ChEBI" id="CHEBI:18420"/>
    </cofactor>
</comment>
<comment type="subunit">
    <text evidence="1">Homotetramer.</text>
</comment>
<comment type="subcellular location">
    <subcellularLocation>
        <location evidence="1">Cytoplasm</location>
    </subcellularLocation>
</comment>
<comment type="similarity">
    <text evidence="1">Belongs to the NDK family.</text>
</comment>
<keyword id="KW-0067">ATP-binding</keyword>
<keyword id="KW-0963">Cytoplasm</keyword>
<keyword id="KW-0418">Kinase</keyword>
<keyword id="KW-0460">Magnesium</keyword>
<keyword id="KW-0479">Metal-binding</keyword>
<keyword id="KW-0546">Nucleotide metabolism</keyword>
<keyword id="KW-0547">Nucleotide-binding</keyword>
<keyword id="KW-0597">Phosphoprotein</keyword>
<keyword id="KW-1185">Reference proteome</keyword>
<keyword id="KW-0808">Transferase</keyword>
<accession>Q8RBR5</accession>
<name>NDK_CALS4</name>